<evidence type="ECO:0000250" key="1"/>
<evidence type="ECO:0000255" key="2">
    <source>
        <dbReference type="PROSITE-ProRule" id="PRU00541"/>
    </source>
</evidence>
<evidence type="ECO:0000255" key="3">
    <source>
        <dbReference type="PROSITE-ProRule" id="PRU00542"/>
    </source>
</evidence>
<evidence type="ECO:0000256" key="4">
    <source>
        <dbReference type="SAM" id="MobiDB-lite"/>
    </source>
</evidence>
<evidence type="ECO:0000305" key="5"/>
<comment type="function">
    <text evidence="1">ATP-binding RNA helicase involved in translation initiation. Remodels RNA in response to ADP and ATP concentrations by facilitating disruption, but also formation of RNA duplexes (By similarity).</text>
</comment>
<comment type="catalytic activity">
    <reaction>
        <text>ATP + H2O = ADP + phosphate + H(+)</text>
        <dbReference type="Rhea" id="RHEA:13065"/>
        <dbReference type="ChEBI" id="CHEBI:15377"/>
        <dbReference type="ChEBI" id="CHEBI:15378"/>
        <dbReference type="ChEBI" id="CHEBI:30616"/>
        <dbReference type="ChEBI" id="CHEBI:43474"/>
        <dbReference type="ChEBI" id="CHEBI:456216"/>
        <dbReference type="EC" id="3.6.4.13"/>
    </reaction>
</comment>
<comment type="subcellular location">
    <subcellularLocation>
        <location evidence="1">Cytoplasm</location>
    </subcellularLocation>
</comment>
<comment type="domain">
    <text>The Q motif is unique to and characteristic of the DEAD box family of RNA helicases and controls ATP binding and hydrolysis.</text>
</comment>
<comment type="similarity">
    <text evidence="5">Belongs to the DEAD box helicase family. DDX3/DED1 subfamily.</text>
</comment>
<sequence>MADQLNMAGLSVGGGGPGNGPRSYIPPHMRGKVGGPGMNGPQNGPQNGGGPPGHDGPPSSVNNGLNNSAWAGNQNHDARGGNWGNQGGGPPPRNNNWNRPSFNPNAYGGGNQGGGHGGGGGGGYARGSGDGQWRDGKHIPGPVNARVERELFGTPDDPSKQHTGINFEKYDDIPVEASGHDVPEPVYTFSNPPLDDHLISNIELARYKVPTPVQKYSVPIVMGGRDLMACAQTGSGKTGGFLFPILSQAFKTGPSPIPATNQGPGGYGRQRKAYPTSLILAPTRELVSQIYDESRKFAYRSWVRPCVVYGGADIGSQLRQIERGCDLLVATPGRLVDLIERGRISLCNIKYLVLDEADRMLDMGFEPQIRRIVEGEDMPNVQDRQTLMFSATFPGYIQQLARDFLKDYIFLSVGRVGSTSENITQRVMEVKHRDDKISHLLDLLSTHGGGLTLIFVETKRNADELSDFLQNQNLPATSIHGDRTQRERERALEMFRTGRCPILVATAVAARGLDIPNVTHVINYDLPTDIDDYVHRIGRTGRAGNTGIATAFFDMKDNSGVAQELLNILKEAKQDIPPFLETAARMKSYGGGRGRGGGGRGRGGGGNRDFRKFGGGGGGGFNGGGGGGFSGGGYGGGGGGYGGGGGGYGGGGYGGGGGGSYGNPGGGQSWW</sequence>
<protein>
    <recommendedName>
        <fullName>ATP-dependent RNA helicase DED1</fullName>
        <ecNumber>3.6.4.13</ecNumber>
    </recommendedName>
</protein>
<feature type="chain" id="PRO_0000294612" description="ATP-dependent RNA helicase DED1">
    <location>
        <begin position="1"/>
        <end position="671"/>
    </location>
</feature>
<feature type="domain" description="Helicase ATP-binding" evidence="2">
    <location>
        <begin position="218"/>
        <end position="411"/>
    </location>
</feature>
<feature type="domain" description="Helicase C-terminal" evidence="3">
    <location>
        <begin position="422"/>
        <end position="584"/>
    </location>
</feature>
<feature type="region of interest" description="Disordered" evidence="4">
    <location>
        <begin position="1"/>
        <end position="141"/>
    </location>
</feature>
<feature type="region of interest" description="Disordered" evidence="4">
    <location>
        <begin position="588"/>
        <end position="612"/>
    </location>
</feature>
<feature type="short sequence motif" description="Q motif">
    <location>
        <begin position="187"/>
        <end position="215"/>
    </location>
</feature>
<feature type="short sequence motif" description="DEAD box">
    <location>
        <begin position="355"/>
        <end position="358"/>
    </location>
</feature>
<feature type="compositionally biased region" description="Polar residues" evidence="4">
    <location>
        <begin position="59"/>
        <end position="75"/>
    </location>
</feature>
<feature type="compositionally biased region" description="Low complexity" evidence="4">
    <location>
        <begin position="94"/>
        <end position="105"/>
    </location>
</feature>
<feature type="compositionally biased region" description="Gly residues" evidence="4">
    <location>
        <begin position="107"/>
        <end position="130"/>
    </location>
</feature>
<feature type="compositionally biased region" description="Gly residues" evidence="4">
    <location>
        <begin position="589"/>
        <end position="612"/>
    </location>
</feature>
<feature type="binding site" evidence="2">
    <location>
        <begin position="231"/>
        <end position="238"/>
    </location>
    <ligand>
        <name>ATP</name>
        <dbReference type="ChEBI" id="CHEBI:30616"/>
    </ligand>
</feature>
<gene>
    <name type="primary">DED1</name>
    <name type="ORF">MGG_07033</name>
</gene>
<organism>
    <name type="scientific">Pyricularia oryzae (strain 70-15 / ATCC MYA-4617 / FGSC 8958)</name>
    <name type="common">Rice blast fungus</name>
    <name type="synonym">Magnaporthe oryzae</name>
    <dbReference type="NCBI Taxonomy" id="242507"/>
    <lineage>
        <taxon>Eukaryota</taxon>
        <taxon>Fungi</taxon>
        <taxon>Dikarya</taxon>
        <taxon>Ascomycota</taxon>
        <taxon>Pezizomycotina</taxon>
        <taxon>Sordariomycetes</taxon>
        <taxon>Sordariomycetidae</taxon>
        <taxon>Magnaporthales</taxon>
        <taxon>Pyriculariaceae</taxon>
        <taxon>Pyricularia</taxon>
    </lineage>
</organism>
<dbReference type="EC" id="3.6.4.13"/>
<dbReference type="EMBL" id="CM001232">
    <property type="protein sequence ID" value="EHA55408.1"/>
    <property type="molecule type" value="Genomic_DNA"/>
</dbReference>
<dbReference type="RefSeq" id="XP_003715215.1">
    <property type="nucleotide sequence ID" value="XM_003715167.1"/>
</dbReference>
<dbReference type="SMR" id="A4RHF1"/>
<dbReference type="FunCoup" id="A4RHF1">
    <property type="interactions" value="1256"/>
</dbReference>
<dbReference type="STRING" id="242507.A4RHF1"/>
<dbReference type="EnsemblFungi" id="MGG_07033T0">
    <property type="protein sequence ID" value="MGG_07033T0"/>
    <property type="gene ID" value="MGG_07033"/>
</dbReference>
<dbReference type="GeneID" id="2683047"/>
<dbReference type="KEGG" id="mgr:MGG_07033"/>
<dbReference type="VEuPathDB" id="FungiDB:MGG_07033"/>
<dbReference type="eggNOG" id="KOG0335">
    <property type="taxonomic scope" value="Eukaryota"/>
</dbReference>
<dbReference type="HOGENOM" id="CLU_003041_16_3_1"/>
<dbReference type="InParanoid" id="A4RHF1"/>
<dbReference type="OMA" id="CYRSWVR"/>
<dbReference type="OrthoDB" id="196131at2759"/>
<dbReference type="Proteomes" id="UP000009058">
    <property type="component" value="Chromosome 2"/>
</dbReference>
<dbReference type="GO" id="GO:0010494">
    <property type="term" value="C:cytoplasmic stress granule"/>
    <property type="evidence" value="ECO:0007669"/>
    <property type="project" value="EnsemblFungi"/>
</dbReference>
<dbReference type="GO" id="GO:0005681">
    <property type="term" value="C:spliceosomal complex"/>
    <property type="evidence" value="ECO:0007669"/>
    <property type="project" value="EnsemblFungi"/>
</dbReference>
<dbReference type="GO" id="GO:0005524">
    <property type="term" value="F:ATP binding"/>
    <property type="evidence" value="ECO:0007669"/>
    <property type="project" value="UniProtKB-KW"/>
</dbReference>
<dbReference type="GO" id="GO:0016887">
    <property type="term" value="F:ATP hydrolysis activity"/>
    <property type="evidence" value="ECO:0007669"/>
    <property type="project" value="RHEA"/>
</dbReference>
<dbReference type="GO" id="GO:0031370">
    <property type="term" value="F:eukaryotic initiation factor 4G binding"/>
    <property type="evidence" value="ECO:0007669"/>
    <property type="project" value="EnsemblFungi"/>
</dbReference>
<dbReference type="GO" id="GO:0051880">
    <property type="term" value="F:G-quadruplex DNA binding"/>
    <property type="evidence" value="ECO:0007669"/>
    <property type="project" value="EnsemblFungi"/>
</dbReference>
<dbReference type="GO" id="GO:0002151">
    <property type="term" value="F:G-quadruplex RNA binding"/>
    <property type="evidence" value="ECO:0007669"/>
    <property type="project" value="EnsemblFungi"/>
</dbReference>
<dbReference type="GO" id="GO:0003729">
    <property type="term" value="F:mRNA binding"/>
    <property type="evidence" value="ECO:0007669"/>
    <property type="project" value="EnsemblFungi"/>
</dbReference>
<dbReference type="GO" id="GO:0003724">
    <property type="term" value="F:RNA helicase activity"/>
    <property type="evidence" value="ECO:0007669"/>
    <property type="project" value="UniProtKB-EC"/>
</dbReference>
<dbReference type="GO" id="GO:0033592">
    <property type="term" value="F:RNA strand annealing activity"/>
    <property type="evidence" value="ECO:0007669"/>
    <property type="project" value="EnsemblFungi"/>
</dbReference>
<dbReference type="GO" id="GO:0003743">
    <property type="term" value="F:translation initiation factor activity"/>
    <property type="evidence" value="ECO:0007669"/>
    <property type="project" value="UniProtKB-KW"/>
</dbReference>
<dbReference type="GO" id="GO:0002183">
    <property type="term" value="P:cytoplasmic translational initiation"/>
    <property type="evidence" value="ECO:0007669"/>
    <property type="project" value="EnsemblFungi"/>
</dbReference>
<dbReference type="GO" id="GO:1990625">
    <property type="term" value="P:negative regulation of cytoplasmic translational initiation in response to stress"/>
    <property type="evidence" value="ECO:0007669"/>
    <property type="project" value="EnsemblFungi"/>
</dbReference>
<dbReference type="GO" id="GO:1901195">
    <property type="term" value="P:positive regulation of formation of translation preinitiation complex"/>
    <property type="evidence" value="ECO:0007669"/>
    <property type="project" value="EnsemblFungi"/>
</dbReference>
<dbReference type="GO" id="GO:0031047">
    <property type="term" value="P:regulatory ncRNA-mediated gene silencing"/>
    <property type="evidence" value="ECO:0007669"/>
    <property type="project" value="EnsemblFungi"/>
</dbReference>
<dbReference type="GO" id="GO:0000390">
    <property type="term" value="P:spliceosomal complex disassembly"/>
    <property type="evidence" value="ECO:0007669"/>
    <property type="project" value="EnsemblFungi"/>
</dbReference>
<dbReference type="CDD" id="cd18787">
    <property type="entry name" value="SF2_C_DEAD"/>
    <property type="match status" value="1"/>
</dbReference>
<dbReference type="FunFam" id="3.40.50.300:FF:000160">
    <property type="entry name" value="ATP-dependent RNA helicase DDX3X"/>
    <property type="match status" value="1"/>
</dbReference>
<dbReference type="FunFam" id="3.40.50.300:FF:000008">
    <property type="entry name" value="ATP-dependent RNA helicase RhlB"/>
    <property type="match status" value="1"/>
</dbReference>
<dbReference type="Gene3D" id="3.40.50.300">
    <property type="entry name" value="P-loop containing nucleotide triphosphate hydrolases"/>
    <property type="match status" value="2"/>
</dbReference>
<dbReference type="InterPro" id="IPR011545">
    <property type="entry name" value="DEAD/DEAH_box_helicase_dom"/>
</dbReference>
<dbReference type="InterPro" id="IPR014001">
    <property type="entry name" value="Helicase_ATP-bd"/>
</dbReference>
<dbReference type="InterPro" id="IPR001650">
    <property type="entry name" value="Helicase_C-like"/>
</dbReference>
<dbReference type="InterPro" id="IPR027417">
    <property type="entry name" value="P-loop_NTPase"/>
</dbReference>
<dbReference type="InterPro" id="IPR000629">
    <property type="entry name" value="RNA-helicase_DEAD-box_CS"/>
</dbReference>
<dbReference type="InterPro" id="IPR014014">
    <property type="entry name" value="RNA_helicase_DEAD_Q_motif"/>
</dbReference>
<dbReference type="PANTHER" id="PTHR47958">
    <property type="entry name" value="ATP-DEPENDENT RNA HELICASE DBP3"/>
    <property type="match status" value="1"/>
</dbReference>
<dbReference type="Pfam" id="PF00270">
    <property type="entry name" value="DEAD"/>
    <property type="match status" value="1"/>
</dbReference>
<dbReference type="Pfam" id="PF00271">
    <property type="entry name" value="Helicase_C"/>
    <property type="match status" value="1"/>
</dbReference>
<dbReference type="SMART" id="SM00487">
    <property type="entry name" value="DEXDc"/>
    <property type="match status" value="1"/>
</dbReference>
<dbReference type="SMART" id="SM00490">
    <property type="entry name" value="HELICc"/>
    <property type="match status" value="1"/>
</dbReference>
<dbReference type="SUPFAM" id="SSF52540">
    <property type="entry name" value="P-loop containing nucleoside triphosphate hydrolases"/>
    <property type="match status" value="1"/>
</dbReference>
<dbReference type="PROSITE" id="PS00039">
    <property type="entry name" value="DEAD_ATP_HELICASE"/>
    <property type="match status" value="1"/>
</dbReference>
<dbReference type="PROSITE" id="PS51192">
    <property type="entry name" value="HELICASE_ATP_BIND_1"/>
    <property type="match status" value="1"/>
</dbReference>
<dbReference type="PROSITE" id="PS51194">
    <property type="entry name" value="HELICASE_CTER"/>
    <property type="match status" value="1"/>
</dbReference>
<dbReference type="PROSITE" id="PS51195">
    <property type="entry name" value="Q_MOTIF"/>
    <property type="match status" value="1"/>
</dbReference>
<keyword id="KW-0067">ATP-binding</keyword>
<keyword id="KW-0963">Cytoplasm</keyword>
<keyword id="KW-0347">Helicase</keyword>
<keyword id="KW-0378">Hydrolase</keyword>
<keyword id="KW-0396">Initiation factor</keyword>
<keyword id="KW-0547">Nucleotide-binding</keyword>
<keyword id="KW-0648">Protein biosynthesis</keyword>
<keyword id="KW-1185">Reference proteome</keyword>
<keyword id="KW-0694">RNA-binding</keyword>
<name>DED1_PYRO7</name>
<proteinExistence type="inferred from homology"/>
<reference key="1">
    <citation type="journal article" date="2005" name="Nature">
        <title>The genome sequence of the rice blast fungus Magnaporthe grisea.</title>
        <authorList>
            <person name="Dean R.A."/>
            <person name="Talbot N.J."/>
            <person name="Ebbole D.J."/>
            <person name="Farman M.L."/>
            <person name="Mitchell T.K."/>
            <person name="Orbach M.J."/>
            <person name="Thon M.R."/>
            <person name="Kulkarni R."/>
            <person name="Xu J.-R."/>
            <person name="Pan H."/>
            <person name="Read N.D."/>
            <person name="Lee Y.-H."/>
            <person name="Carbone I."/>
            <person name="Brown D."/>
            <person name="Oh Y.Y."/>
            <person name="Donofrio N."/>
            <person name="Jeong J.S."/>
            <person name="Soanes D.M."/>
            <person name="Djonovic S."/>
            <person name="Kolomiets E."/>
            <person name="Rehmeyer C."/>
            <person name="Li W."/>
            <person name="Harding M."/>
            <person name="Kim S."/>
            <person name="Lebrun M.-H."/>
            <person name="Bohnert H."/>
            <person name="Coughlan S."/>
            <person name="Butler J."/>
            <person name="Calvo S.E."/>
            <person name="Ma L.-J."/>
            <person name="Nicol R."/>
            <person name="Purcell S."/>
            <person name="Nusbaum C."/>
            <person name="Galagan J.E."/>
            <person name="Birren B.W."/>
        </authorList>
    </citation>
    <scope>NUCLEOTIDE SEQUENCE [LARGE SCALE GENOMIC DNA]</scope>
    <source>
        <strain>70-15 / ATCC MYA-4617 / FGSC 8958</strain>
    </source>
</reference>
<accession>A4RHF1</accession>
<accession>G4MZP4</accession>